<feature type="chain" id="PRO_0000176813" description="Small ribosomal subunit protein bS6">
    <location>
        <begin position="1"/>
        <end position="147"/>
    </location>
</feature>
<feature type="region of interest" description="Disordered" evidence="2">
    <location>
        <begin position="96"/>
        <end position="147"/>
    </location>
</feature>
<feature type="compositionally biased region" description="Basic and acidic residues" evidence="2">
    <location>
        <begin position="104"/>
        <end position="147"/>
    </location>
</feature>
<sequence length="147" mass="16920">MRHYEIVFMVHPDQSEQVAGMIERYTGSIKDSGGQIHRLEDWGRRQMAYPINKLHKAHYVLMNIEAEQSVVDELESTFRFNDAVIRNMIMRAKNAVTEPSPMMKAKEERFTKRDDREERSDRSEAPRAEAPAKAEAPAKAEDEAAAE</sequence>
<comment type="function">
    <text evidence="1">Binds together with bS18 to 16S ribosomal RNA.</text>
</comment>
<comment type="similarity">
    <text evidence="1">Belongs to the bacterial ribosomal protein bS6 family.</text>
</comment>
<accession>Q6LM41</accession>
<protein>
    <recommendedName>
        <fullName evidence="1">Small ribosomal subunit protein bS6</fullName>
    </recommendedName>
    <alternativeName>
        <fullName evidence="3">30S ribosomal protein S6</fullName>
    </alternativeName>
</protein>
<dbReference type="EMBL" id="CR378673">
    <property type="protein sequence ID" value="CAG21637.1"/>
    <property type="molecule type" value="Genomic_DNA"/>
</dbReference>
<dbReference type="RefSeq" id="WP_011219884.1">
    <property type="nucleotide sequence ID" value="NC_006370.1"/>
</dbReference>
<dbReference type="SMR" id="Q6LM41"/>
<dbReference type="STRING" id="298386.PBPRA3339"/>
<dbReference type="KEGG" id="ppr:PBPRA3339"/>
<dbReference type="eggNOG" id="COG0360">
    <property type="taxonomic scope" value="Bacteria"/>
</dbReference>
<dbReference type="HOGENOM" id="CLU_113441_6_1_6"/>
<dbReference type="Proteomes" id="UP000000593">
    <property type="component" value="Chromosome 1"/>
</dbReference>
<dbReference type="GO" id="GO:0022627">
    <property type="term" value="C:cytosolic small ribosomal subunit"/>
    <property type="evidence" value="ECO:0007669"/>
    <property type="project" value="TreeGrafter"/>
</dbReference>
<dbReference type="GO" id="GO:0070181">
    <property type="term" value="F:small ribosomal subunit rRNA binding"/>
    <property type="evidence" value="ECO:0007669"/>
    <property type="project" value="TreeGrafter"/>
</dbReference>
<dbReference type="GO" id="GO:0003735">
    <property type="term" value="F:structural constituent of ribosome"/>
    <property type="evidence" value="ECO:0007669"/>
    <property type="project" value="InterPro"/>
</dbReference>
<dbReference type="GO" id="GO:0006412">
    <property type="term" value="P:translation"/>
    <property type="evidence" value="ECO:0007669"/>
    <property type="project" value="UniProtKB-UniRule"/>
</dbReference>
<dbReference type="CDD" id="cd00473">
    <property type="entry name" value="bS6"/>
    <property type="match status" value="1"/>
</dbReference>
<dbReference type="FunFam" id="3.30.70.60:FF:000003">
    <property type="entry name" value="30S ribosomal protein S6"/>
    <property type="match status" value="1"/>
</dbReference>
<dbReference type="Gene3D" id="3.30.70.60">
    <property type="match status" value="1"/>
</dbReference>
<dbReference type="HAMAP" id="MF_00360">
    <property type="entry name" value="Ribosomal_bS6"/>
    <property type="match status" value="1"/>
</dbReference>
<dbReference type="InterPro" id="IPR000529">
    <property type="entry name" value="Ribosomal_bS6"/>
</dbReference>
<dbReference type="InterPro" id="IPR035980">
    <property type="entry name" value="Ribosomal_bS6_sf"/>
</dbReference>
<dbReference type="InterPro" id="IPR020814">
    <property type="entry name" value="Ribosomal_S6_plastid/chlpt"/>
</dbReference>
<dbReference type="InterPro" id="IPR014717">
    <property type="entry name" value="Transl_elong_EF1B/ribsomal_bS6"/>
</dbReference>
<dbReference type="NCBIfam" id="TIGR00166">
    <property type="entry name" value="S6"/>
    <property type="match status" value="1"/>
</dbReference>
<dbReference type="PANTHER" id="PTHR21011">
    <property type="entry name" value="MITOCHONDRIAL 28S RIBOSOMAL PROTEIN S6"/>
    <property type="match status" value="1"/>
</dbReference>
<dbReference type="PANTHER" id="PTHR21011:SF1">
    <property type="entry name" value="SMALL RIBOSOMAL SUBUNIT PROTEIN BS6M"/>
    <property type="match status" value="1"/>
</dbReference>
<dbReference type="Pfam" id="PF01250">
    <property type="entry name" value="Ribosomal_S6"/>
    <property type="match status" value="1"/>
</dbReference>
<dbReference type="SUPFAM" id="SSF54995">
    <property type="entry name" value="Ribosomal protein S6"/>
    <property type="match status" value="1"/>
</dbReference>
<name>RS6_PHOPR</name>
<proteinExistence type="inferred from homology"/>
<gene>
    <name evidence="1" type="primary">rpsF</name>
    <name type="ordered locus">PBPRA3339</name>
</gene>
<reference key="1">
    <citation type="journal article" date="2005" name="Science">
        <title>Life at depth: Photobacterium profundum genome sequence and expression analysis.</title>
        <authorList>
            <person name="Vezzi A."/>
            <person name="Campanaro S."/>
            <person name="D'Angelo M."/>
            <person name="Simonato F."/>
            <person name="Vitulo N."/>
            <person name="Lauro F.M."/>
            <person name="Cestaro A."/>
            <person name="Malacrida G."/>
            <person name="Simionati B."/>
            <person name="Cannata N."/>
            <person name="Romualdi C."/>
            <person name="Bartlett D.H."/>
            <person name="Valle G."/>
        </authorList>
    </citation>
    <scope>NUCLEOTIDE SEQUENCE [LARGE SCALE GENOMIC DNA]</scope>
    <source>
        <strain>ATCC BAA-1253 / SS9</strain>
    </source>
</reference>
<keyword id="KW-1185">Reference proteome</keyword>
<keyword id="KW-0687">Ribonucleoprotein</keyword>
<keyword id="KW-0689">Ribosomal protein</keyword>
<keyword id="KW-0694">RNA-binding</keyword>
<keyword id="KW-0699">rRNA-binding</keyword>
<evidence type="ECO:0000255" key="1">
    <source>
        <dbReference type="HAMAP-Rule" id="MF_00360"/>
    </source>
</evidence>
<evidence type="ECO:0000256" key="2">
    <source>
        <dbReference type="SAM" id="MobiDB-lite"/>
    </source>
</evidence>
<evidence type="ECO:0000305" key="3"/>
<organism>
    <name type="scientific">Photobacterium profundum (strain SS9)</name>
    <dbReference type="NCBI Taxonomy" id="298386"/>
    <lineage>
        <taxon>Bacteria</taxon>
        <taxon>Pseudomonadati</taxon>
        <taxon>Pseudomonadota</taxon>
        <taxon>Gammaproteobacteria</taxon>
        <taxon>Vibrionales</taxon>
        <taxon>Vibrionaceae</taxon>
        <taxon>Photobacterium</taxon>
    </lineage>
</organism>